<name>GSKIP_CHICK</name>
<keyword id="KW-0963">Cytoplasm</keyword>
<keyword id="KW-1185">Reference proteome</keyword>
<feature type="chain" id="PRO_0000359877" description="GSK3-beta interaction protein">
    <location>
        <begin position="1"/>
        <end position="139"/>
    </location>
</feature>
<feature type="region of interest" description="Disordered" evidence="2">
    <location>
        <begin position="1"/>
        <end position="23"/>
    </location>
</feature>
<protein>
    <recommendedName>
        <fullName>GSK3-beta interaction protein</fullName>
        <shortName>GSKIP</shortName>
    </recommendedName>
</protein>
<organism>
    <name type="scientific">Gallus gallus</name>
    <name type="common">Chicken</name>
    <dbReference type="NCBI Taxonomy" id="9031"/>
    <lineage>
        <taxon>Eukaryota</taxon>
        <taxon>Metazoa</taxon>
        <taxon>Chordata</taxon>
        <taxon>Craniata</taxon>
        <taxon>Vertebrata</taxon>
        <taxon>Euteleostomi</taxon>
        <taxon>Archelosauria</taxon>
        <taxon>Archosauria</taxon>
        <taxon>Dinosauria</taxon>
        <taxon>Saurischia</taxon>
        <taxon>Theropoda</taxon>
        <taxon>Coelurosauria</taxon>
        <taxon>Aves</taxon>
        <taxon>Neognathae</taxon>
        <taxon>Galloanserae</taxon>
        <taxon>Galliformes</taxon>
        <taxon>Phasianidae</taxon>
        <taxon>Phasianinae</taxon>
        <taxon>Gallus</taxon>
    </lineage>
</organism>
<comment type="subcellular location">
    <subcellularLocation>
        <location evidence="1">Cytoplasm</location>
    </subcellularLocation>
</comment>
<comment type="similarity">
    <text evidence="3">Belongs to the GSKIP family.</text>
</comment>
<reference key="1">
    <citation type="journal article" date="2005" name="Genome Biol.">
        <title>Full-length cDNAs from chicken bursal lymphocytes to facilitate gene function analysis.</title>
        <authorList>
            <person name="Caldwell R.B."/>
            <person name="Kierzek A.M."/>
            <person name="Arakawa H."/>
            <person name="Bezzubov Y."/>
            <person name="Zaim J."/>
            <person name="Fiedler P."/>
            <person name="Kutter S."/>
            <person name="Blagodatski A."/>
            <person name="Kostovska D."/>
            <person name="Koter M."/>
            <person name="Plachy J."/>
            <person name="Carninci P."/>
            <person name="Hayashizaki Y."/>
            <person name="Buerstedde J.-M."/>
        </authorList>
    </citation>
    <scope>NUCLEOTIDE SEQUENCE [LARGE SCALE MRNA]</scope>
    <source>
        <strain>CB</strain>
        <tissue>Bursa of Fabricius</tissue>
    </source>
</reference>
<sequence length="139" mass="15885">METDCSPMELTNNTESEEDSDYRDFEEADVKDMRLEAEAVVNDVLFAVSNMFVSKTLPCAEDVAYINVETRERGRYCVELTDSGLRVVAYDFDQTDDSLQNPYHETVYSLLDTLSPAYREVFGNALLQRLEALKRDSQS</sequence>
<evidence type="ECO:0000250" key="1"/>
<evidence type="ECO:0000256" key="2">
    <source>
        <dbReference type="SAM" id="MobiDB-lite"/>
    </source>
</evidence>
<evidence type="ECO:0000305" key="3"/>
<dbReference type="EMBL" id="AJ719458">
    <property type="protein sequence ID" value="CAG31117.1"/>
    <property type="molecule type" value="mRNA"/>
</dbReference>
<dbReference type="RefSeq" id="NP_001008473.1">
    <property type="nucleotide sequence ID" value="NM_001008473.2"/>
</dbReference>
<dbReference type="RefSeq" id="XP_015142942.1">
    <property type="nucleotide sequence ID" value="XM_015287456.1"/>
</dbReference>
<dbReference type="RefSeq" id="XP_015142943.1">
    <property type="nucleotide sequence ID" value="XM_015287457.4"/>
</dbReference>
<dbReference type="RefSeq" id="XP_046774603.1">
    <property type="nucleotide sequence ID" value="XM_046918647.1"/>
</dbReference>
<dbReference type="RefSeq" id="XP_046774604.1">
    <property type="nucleotide sequence ID" value="XM_046918648.1"/>
</dbReference>
<dbReference type="RefSeq" id="XP_046797762.1">
    <property type="nucleotide sequence ID" value="XM_046941806.1"/>
</dbReference>
<dbReference type="SMR" id="Q5ZMC6"/>
<dbReference type="FunCoup" id="Q5ZMC6">
    <property type="interactions" value="405"/>
</dbReference>
<dbReference type="STRING" id="9031.ENSGALP00000070222"/>
<dbReference type="PaxDb" id="9031-ENSGALP00000018044"/>
<dbReference type="GeneID" id="423442"/>
<dbReference type="KEGG" id="gga:423442"/>
<dbReference type="CTD" id="51527"/>
<dbReference type="VEuPathDB" id="HostDB:geneid_423442"/>
<dbReference type="eggNOG" id="KOG3965">
    <property type="taxonomic scope" value="Eukaryota"/>
</dbReference>
<dbReference type="HOGENOM" id="CLU_143747_0_0_1"/>
<dbReference type="InParanoid" id="Q5ZMC6"/>
<dbReference type="OrthoDB" id="5804279at2759"/>
<dbReference type="PhylomeDB" id="Q5ZMC6"/>
<dbReference type="TreeFam" id="TF313906"/>
<dbReference type="PRO" id="PR:Q5ZMC6"/>
<dbReference type="Proteomes" id="UP000000539">
    <property type="component" value="Chromosome 5"/>
</dbReference>
<dbReference type="Bgee" id="ENSGALG00000011088">
    <property type="expression patterns" value="Expressed in lung and 14 other cell types or tissues"/>
</dbReference>
<dbReference type="GO" id="GO:0005737">
    <property type="term" value="C:cytoplasm"/>
    <property type="evidence" value="ECO:0000318"/>
    <property type="project" value="GO_Central"/>
</dbReference>
<dbReference type="GO" id="GO:0019207">
    <property type="term" value="F:kinase regulator activity"/>
    <property type="evidence" value="ECO:0000318"/>
    <property type="project" value="GO_Central"/>
</dbReference>
<dbReference type="GO" id="GO:0051018">
    <property type="term" value="F:protein kinase A binding"/>
    <property type="evidence" value="ECO:0000318"/>
    <property type="project" value="GO_Central"/>
</dbReference>
<dbReference type="GO" id="GO:0060828">
    <property type="term" value="P:regulation of canonical Wnt signaling pathway"/>
    <property type="evidence" value="ECO:0007669"/>
    <property type="project" value="InterPro"/>
</dbReference>
<dbReference type="GO" id="GO:0030111">
    <property type="term" value="P:regulation of Wnt signaling pathway"/>
    <property type="evidence" value="ECO:0000318"/>
    <property type="project" value="GO_Central"/>
</dbReference>
<dbReference type="Gene3D" id="3.30.2280.10">
    <property type="entry name" value="Hypothetical protein (hspc210)"/>
    <property type="match status" value="1"/>
</dbReference>
<dbReference type="InterPro" id="IPR037395">
    <property type="entry name" value="GSKIP"/>
</dbReference>
<dbReference type="InterPro" id="IPR007967">
    <property type="entry name" value="GSKIP_dom"/>
</dbReference>
<dbReference type="InterPro" id="IPR023231">
    <property type="entry name" value="GSKIP_dom_sf"/>
</dbReference>
<dbReference type="PANTHER" id="PTHR12490">
    <property type="entry name" value="GSK3B-INTERACTING PROTEIN"/>
    <property type="match status" value="1"/>
</dbReference>
<dbReference type="PANTHER" id="PTHR12490:SF4">
    <property type="entry name" value="GSK3B-INTERACTING PROTEIN"/>
    <property type="match status" value="1"/>
</dbReference>
<dbReference type="Pfam" id="PF05303">
    <property type="entry name" value="GSKIP_dom"/>
    <property type="match status" value="1"/>
</dbReference>
<dbReference type="SUPFAM" id="SSF103107">
    <property type="entry name" value="Hypothetical protein c14orf129, hspc210"/>
    <property type="match status" value="1"/>
</dbReference>
<gene>
    <name type="primary">GSKIP</name>
    <name type="ORF">RCJMB04_2i15</name>
</gene>
<accession>Q5ZMC6</accession>
<proteinExistence type="evidence at transcript level"/>